<protein>
    <recommendedName>
        <fullName evidence="1">Large ribosomal subunit protein bL32</fullName>
    </recommendedName>
    <alternativeName>
        <fullName evidence="3">50S ribosomal protein L32</fullName>
    </alternativeName>
</protein>
<gene>
    <name evidence="1" type="primary">rpmF</name>
    <name type="ordered locus">SSON_1109</name>
</gene>
<organism>
    <name type="scientific">Shigella sonnei (strain Ss046)</name>
    <dbReference type="NCBI Taxonomy" id="300269"/>
    <lineage>
        <taxon>Bacteria</taxon>
        <taxon>Pseudomonadati</taxon>
        <taxon>Pseudomonadota</taxon>
        <taxon>Gammaproteobacteria</taxon>
        <taxon>Enterobacterales</taxon>
        <taxon>Enterobacteriaceae</taxon>
        <taxon>Shigella</taxon>
    </lineage>
</organism>
<reference key="1">
    <citation type="journal article" date="2005" name="Nucleic Acids Res.">
        <title>Genome dynamics and diversity of Shigella species, the etiologic agents of bacillary dysentery.</title>
        <authorList>
            <person name="Yang F."/>
            <person name="Yang J."/>
            <person name="Zhang X."/>
            <person name="Chen L."/>
            <person name="Jiang Y."/>
            <person name="Yan Y."/>
            <person name="Tang X."/>
            <person name="Wang J."/>
            <person name="Xiong Z."/>
            <person name="Dong J."/>
            <person name="Xue Y."/>
            <person name="Zhu Y."/>
            <person name="Xu X."/>
            <person name="Sun L."/>
            <person name="Chen S."/>
            <person name="Nie H."/>
            <person name="Peng J."/>
            <person name="Xu J."/>
            <person name="Wang Y."/>
            <person name="Yuan Z."/>
            <person name="Wen Y."/>
            <person name="Yao Z."/>
            <person name="Shen Y."/>
            <person name="Qiang B."/>
            <person name="Hou Y."/>
            <person name="Yu J."/>
            <person name="Jin Q."/>
        </authorList>
    </citation>
    <scope>NUCLEOTIDE SEQUENCE [LARGE SCALE GENOMIC DNA]</scope>
    <source>
        <strain>Ss046</strain>
    </source>
</reference>
<proteinExistence type="inferred from homology"/>
<keyword id="KW-1185">Reference proteome</keyword>
<keyword id="KW-0687">Ribonucleoprotein</keyword>
<keyword id="KW-0689">Ribosomal protein</keyword>
<evidence type="ECO:0000255" key="1">
    <source>
        <dbReference type="HAMAP-Rule" id="MF_00340"/>
    </source>
</evidence>
<evidence type="ECO:0000256" key="2">
    <source>
        <dbReference type="SAM" id="MobiDB-lite"/>
    </source>
</evidence>
<evidence type="ECO:0000305" key="3"/>
<feature type="chain" id="PRO_0000225764" description="Large ribosomal subunit protein bL32">
    <location>
        <begin position="1"/>
        <end position="57"/>
    </location>
</feature>
<feature type="region of interest" description="Disordered" evidence="2">
    <location>
        <begin position="1"/>
        <end position="38"/>
    </location>
</feature>
<sequence length="57" mass="6446">MAVQQNKPTRSKRGMRRSHDALTAVTSLSVDKTSGEKHLRHHITADGYYRGRKVIAK</sequence>
<dbReference type="EMBL" id="CP000038">
    <property type="protein sequence ID" value="AAZ87834.1"/>
    <property type="molecule type" value="Genomic_DNA"/>
</dbReference>
<dbReference type="RefSeq" id="WP_000290727.1">
    <property type="nucleotide sequence ID" value="NC_007384.1"/>
</dbReference>
<dbReference type="SMR" id="Q3Z328"/>
<dbReference type="GeneID" id="93776319"/>
<dbReference type="KEGG" id="ssn:SSON_1109"/>
<dbReference type="HOGENOM" id="CLU_129084_2_1_6"/>
<dbReference type="Proteomes" id="UP000002529">
    <property type="component" value="Chromosome"/>
</dbReference>
<dbReference type="GO" id="GO:0015934">
    <property type="term" value="C:large ribosomal subunit"/>
    <property type="evidence" value="ECO:0007669"/>
    <property type="project" value="InterPro"/>
</dbReference>
<dbReference type="GO" id="GO:0003735">
    <property type="term" value="F:structural constituent of ribosome"/>
    <property type="evidence" value="ECO:0007669"/>
    <property type="project" value="InterPro"/>
</dbReference>
<dbReference type="GO" id="GO:0006412">
    <property type="term" value="P:translation"/>
    <property type="evidence" value="ECO:0007669"/>
    <property type="project" value="UniProtKB-UniRule"/>
</dbReference>
<dbReference type="HAMAP" id="MF_00340">
    <property type="entry name" value="Ribosomal_bL32"/>
    <property type="match status" value="1"/>
</dbReference>
<dbReference type="InterPro" id="IPR002677">
    <property type="entry name" value="Ribosomal_bL32"/>
</dbReference>
<dbReference type="InterPro" id="IPR044957">
    <property type="entry name" value="Ribosomal_bL32_bact"/>
</dbReference>
<dbReference type="InterPro" id="IPR011332">
    <property type="entry name" value="Ribosomal_zn-bd"/>
</dbReference>
<dbReference type="NCBIfam" id="TIGR01031">
    <property type="entry name" value="rpmF_bact"/>
    <property type="match status" value="1"/>
</dbReference>
<dbReference type="PANTHER" id="PTHR35534">
    <property type="entry name" value="50S RIBOSOMAL PROTEIN L32"/>
    <property type="match status" value="1"/>
</dbReference>
<dbReference type="PANTHER" id="PTHR35534:SF1">
    <property type="entry name" value="LARGE RIBOSOMAL SUBUNIT PROTEIN BL32"/>
    <property type="match status" value="1"/>
</dbReference>
<dbReference type="Pfam" id="PF01783">
    <property type="entry name" value="Ribosomal_L32p"/>
    <property type="match status" value="1"/>
</dbReference>
<dbReference type="SUPFAM" id="SSF57829">
    <property type="entry name" value="Zn-binding ribosomal proteins"/>
    <property type="match status" value="1"/>
</dbReference>
<name>RL32_SHISS</name>
<comment type="similarity">
    <text evidence="1">Belongs to the bacterial ribosomal protein bL32 family.</text>
</comment>
<accession>Q3Z328</accession>